<comment type="function">
    <text evidence="1">Together with the chaperonin GroEL, plays an essential role in assisting protein folding. The GroEL-GroES system forms a nano-cage that allows encapsulation of the non-native substrate proteins and provides a physical environment optimized to promote and accelerate protein folding. GroES binds to the apical surface of the GroEL ring, thereby capping the opening of the GroEL channel.</text>
</comment>
<comment type="subunit">
    <text evidence="1">Heptamer of 7 subunits arranged in a ring. Interacts with the chaperonin GroEL.</text>
</comment>
<comment type="subcellular location">
    <subcellularLocation>
        <location evidence="1">Cytoplasm</location>
    </subcellularLocation>
</comment>
<comment type="similarity">
    <text evidence="1">Belongs to the GroES chaperonin family.</text>
</comment>
<accession>Q9F4E8</accession>
<proteinExistence type="inferred from homology"/>
<keyword id="KW-0143">Chaperone</keyword>
<keyword id="KW-0963">Cytoplasm</keyword>
<dbReference type="EMBL" id="AJ401308">
    <property type="protein sequence ID" value="CAC10479.1"/>
    <property type="molecule type" value="Genomic_DNA"/>
</dbReference>
<dbReference type="SMR" id="Q9F4E8"/>
<dbReference type="GO" id="GO:0005737">
    <property type="term" value="C:cytoplasm"/>
    <property type="evidence" value="ECO:0007669"/>
    <property type="project" value="UniProtKB-SubCell"/>
</dbReference>
<dbReference type="GO" id="GO:0005524">
    <property type="term" value="F:ATP binding"/>
    <property type="evidence" value="ECO:0007669"/>
    <property type="project" value="InterPro"/>
</dbReference>
<dbReference type="GO" id="GO:0046872">
    <property type="term" value="F:metal ion binding"/>
    <property type="evidence" value="ECO:0007669"/>
    <property type="project" value="TreeGrafter"/>
</dbReference>
<dbReference type="GO" id="GO:0044183">
    <property type="term" value="F:protein folding chaperone"/>
    <property type="evidence" value="ECO:0007669"/>
    <property type="project" value="InterPro"/>
</dbReference>
<dbReference type="GO" id="GO:0051087">
    <property type="term" value="F:protein-folding chaperone binding"/>
    <property type="evidence" value="ECO:0007669"/>
    <property type="project" value="TreeGrafter"/>
</dbReference>
<dbReference type="GO" id="GO:0051082">
    <property type="term" value="F:unfolded protein binding"/>
    <property type="evidence" value="ECO:0007669"/>
    <property type="project" value="TreeGrafter"/>
</dbReference>
<dbReference type="GO" id="GO:0051085">
    <property type="term" value="P:chaperone cofactor-dependent protein refolding"/>
    <property type="evidence" value="ECO:0007669"/>
    <property type="project" value="TreeGrafter"/>
</dbReference>
<dbReference type="CDD" id="cd00320">
    <property type="entry name" value="cpn10"/>
    <property type="match status" value="1"/>
</dbReference>
<dbReference type="FunFam" id="2.30.33.40:FF:000001">
    <property type="entry name" value="10 kDa chaperonin"/>
    <property type="match status" value="1"/>
</dbReference>
<dbReference type="Gene3D" id="2.30.33.40">
    <property type="entry name" value="GroES chaperonin"/>
    <property type="match status" value="1"/>
</dbReference>
<dbReference type="HAMAP" id="MF_00580">
    <property type="entry name" value="CH10"/>
    <property type="match status" value="1"/>
</dbReference>
<dbReference type="InterPro" id="IPR020818">
    <property type="entry name" value="Chaperonin_GroES"/>
</dbReference>
<dbReference type="InterPro" id="IPR037124">
    <property type="entry name" value="Chaperonin_GroES_sf"/>
</dbReference>
<dbReference type="InterPro" id="IPR018369">
    <property type="entry name" value="Chaprnonin_Cpn10_CS"/>
</dbReference>
<dbReference type="InterPro" id="IPR011032">
    <property type="entry name" value="GroES-like_sf"/>
</dbReference>
<dbReference type="NCBIfam" id="NF001526">
    <property type="entry name" value="PRK00364.1-1"/>
    <property type="match status" value="1"/>
</dbReference>
<dbReference type="NCBIfam" id="NF001527">
    <property type="entry name" value="PRK00364.1-2"/>
    <property type="match status" value="1"/>
</dbReference>
<dbReference type="NCBIfam" id="NF001531">
    <property type="entry name" value="PRK00364.2-2"/>
    <property type="match status" value="1"/>
</dbReference>
<dbReference type="PANTHER" id="PTHR10772">
    <property type="entry name" value="10 KDA HEAT SHOCK PROTEIN"/>
    <property type="match status" value="1"/>
</dbReference>
<dbReference type="PANTHER" id="PTHR10772:SF58">
    <property type="entry name" value="CO-CHAPERONIN GROES"/>
    <property type="match status" value="1"/>
</dbReference>
<dbReference type="Pfam" id="PF00166">
    <property type="entry name" value="Cpn10"/>
    <property type="match status" value="1"/>
</dbReference>
<dbReference type="PRINTS" id="PR00297">
    <property type="entry name" value="CHAPERONIN10"/>
</dbReference>
<dbReference type="SMART" id="SM00883">
    <property type="entry name" value="Cpn10"/>
    <property type="match status" value="1"/>
</dbReference>
<dbReference type="SUPFAM" id="SSF50129">
    <property type="entry name" value="GroES-like"/>
    <property type="match status" value="1"/>
</dbReference>
<dbReference type="PROSITE" id="PS00681">
    <property type="entry name" value="CHAPERONINS_CPN10"/>
    <property type="match status" value="1"/>
</dbReference>
<sequence length="97" mass="10348">MNIRPLHDRVIIKRQESESKSAGGIVLTGSAAGKSTRGTVLAVGNGRILDNGSVKSLDVKVGDVVIFNEGYGAKTEKMDHEEVLILTESDILAIVEE</sequence>
<reference key="1">
    <citation type="journal article" date="2000" name="Proc. Natl. Acad. Sci. U.S.A.">
        <title>Post-symbiotic plasmid acquisition and evolution of the repA1-replicon in Buchnera aphidicola.</title>
        <authorList>
            <person name="Van Ham R.C.H.J."/>
            <person name="Gonzalez-Candelas F."/>
            <person name="Silva F.J."/>
            <person name="Sabater B."/>
            <person name="Moya A."/>
            <person name="Latorre A."/>
        </authorList>
    </citation>
    <scope>NUCLEOTIDE SEQUENCE [GENOMIC DNA]</scope>
</reference>
<evidence type="ECO:0000255" key="1">
    <source>
        <dbReference type="HAMAP-Rule" id="MF_00580"/>
    </source>
</evidence>
<gene>
    <name evidence="1" type="primary">groES</name>
    <name evidence="1" type="synonym">groS</name>
</gene>
<organism>
    <name type="scientific">Buchnera aphidicola subsp. Tetraneura caerulescens</name>
    <dbReference type="NCBI Taxonomy" id="118111"/>
    <lineage>
        <taxon>Bacteria</taxon>
        <taxon>Pseudomonadati</taxon>
        <taxon>Pseudomonadota</taxon>
        <taxon>Gammaproteobacteria</taxon>
        <taxon>Enterobacterales</taxon>
        <taxon>Erwiniaceae</taxon>
        <taxon>Buchnera</taxon>
    </lineage>
</organism>
<protein>
    <recommendedName>
        <fullName evidence="1">Co-chaperonin GroES</fullName>
    </recommendedName>
    <alternativeName>
        <fullName evidence="1">10 kDa chaperonin</fullName>
    </alternativeName>
    <alternativeName>
        <fullName evidence="1">Chaperonin-10</fullName>
        <shortName evidence="1">Cpn10</shortName>
    </alternativeName>
</protein>
<name>CH10_BUCTC</name>
<feature type="chain" id="PRO_0000174719" description="Co-chaperonin GroES">
    <location>
        <begin position="1"/>
        <end position="97"/>
    </location>
</feature>